<name>MIAA_SODGM</name>
<proteinExistence type="inferred from homology"/>
<protein>
    <recommendedName>
        <fullName evidence="1">tRNA dimethylallyltransferase</fullName>
        <ecNumber evidence="1">2.5.1.75</ecNumber>
    </recommendedName>
    <alternativeName>
        <fullName evidence="1">Dimethylallyl diphosphate:tRNA dimethylallyltransferase</fullName>
        <shortName evidence="1">DMAPP:tRNA dimethylallyltransferase</shortName>
        <shortName evidence="1">DMATase</shortName>
    </alternativeName>
    <alternativeName>
        <fullName evidence="1">Isopentenyl-diphosphate:tRNA isopentenyltransferase</fullName>
        <shortName evidence="1">IPP transferase</shortName>
        <shortName evidence="1">IPPT</shortName>
        <shortName evidence="1">IPTase</shortName>
    </alternativeName>
</protein>
<keyword id="KW-0067">ATP-binding</keyword>
<keyword id="KW-0460">Magnesium</keyword>
<keyword id="KW-0547">Nucleotide-binding</keyword>
<keyword id="KW-0808">Transferase</keyword>
<keyword id="KW-0819">tRNA processing</keyword>
<organism>
    <name type="scientific">Sodalis glossinidius (strain morsitans)</name>
    <dbReference type="NCBI Taxonomy" id="343509"/>
    <lineage>
        <taxon>Bacteria</taxon>
        <taxon>Pseudomonadati</taxon>
        <taxon>Pseudomonadota</taxon>
        <taxon>Gammaproteobacteria</taxon>
        <taxon>Enterobacterales</taxon>
        <taxon>Bruguierivoracaceae</taxon>
        <taxon>Sodalis</taxon>
    </lineage>
</organism>
<feature type="chain" id="PRO_1000020661" description="tRNA dimethylallyltransferase">
    <location>
        <begin position="1"/>
        <end position="312"/>
    </location>
</feature>
<feature type="region of interest" description="Interaction with substrate tRNA" evidence="1">
    <location>
        <begin position="42"/>
        <end position="45"/>
    </location>
</feature>
<feature type="region of interest" description="Interaction with substrate tRNA" evidence="1">
    <location>
        <begin position="166"/>
        <end position="170"/>
    </location>
</feature>
<feature type="region of interest" description="Interaction with substrate tRNA" evidence="1">
    <location>
        <begin position="247"/>
        <end position="252"/>
    </location>
</feature>
<feature type="binding site" evidence="1">
    <location>
        <begin position="17"/>
        <end position="24"/>
    </location>
    <ligand>
        <name>ATP</name>
        <dbReference type="ChEBI" id="CHEBI:30616"/>
    </ligand>
</feature>
<feature type="binding site" evidence="1">
    <location>
        <begin position="19"/>
        <end position="24"/>
    </location>
    <ligand>
        <name>substrate</name>
    </ligand>
</feature>
<feature type="site" description="Interaction with substrate tRNA" evidence="1">
    <location>
        <position position="108"/>
    </location>
</feature>
<feature type="site" description="Interaction with substrate tRNA" evidence="1">
    <location>
        <position position="130"/>
    </location>
</feature>
<evidence type="ECO:0000255" key="1">
    <source>
        <dbReference type="HAMAP-Rule" id="MF_00185"/>
    </source>
</evidence>
<comment type="function">
    <text evidence="1">Catalyzes the transfer of a dimethylallyl group onto the adenine at position 37 in tRNAs that read codons beginning with uridine, leading to the formation of N6-(dimethylallyl)adenosine (i(6)A).</text>
</comment>
<comment type="catalytic activity">
    <reaction evidence="1">
        <text>adenosine(37) in tRNA + dimethylallyl diphosphate = N(6)-dimethylallyladenosine(37) in tRNA + diphosphate</text>
        <dbReference type="Rhea" id="RHEA:26482"/>
        <dbReference type="Rhea" id="RHEA-COMP:10162"/>
        <dbReference type="Rhea" id="RHEA-COMP:10375"/>
        <dbReference type="ChEBI" id="CHEBI:33019"/>
        <dbReference type="ChEBI" id="CHEBI:57623"/>
        <dbReference type="ChEBI" id="CHEBI:74411"/>
        <dbReference type="ChEBI" id="CHEBI:74415"/>
        <dbReference type="EC" id="2.5.1.75"/>
    </reaction>
</comment>
<comment type="cofactor">
    <cofactor evidence="1">
        <name>Mg(2+)</name>
        <dbReference type="ChEBI" id="CHEBI:18420"/>
    </cofactor>
</comment>
<comment type="subunit">
    <text evidence="1">Monomer.</text>
</comment>
<comment type="similarity">
    <text evidence="1">Belongs to the IPP transferase family.</text>
</comment>
<accession>Q2NW64</accession>
<dbReference type="EC" id="2.5.1.75" evidence="1"/>
<dbReference type="EMBL" id="AP008232">
    <property type="protein sequence ID" value="BAE73611.1"/>
    <property type="molecule type" value="Genomic_DNA"/>
</dbReference>
<dbReference type="RefSeq" id="WP_011410199.1">
    <property type="nucleotide sequence ID" value="NC_007712.1"/>
</dbReference>
<dbReference type="SMR" id="Q2NW64"/>
<dbReference type="STRING" id="343509.SG0336"/>
<dbReference type="KEGG" id="sgl:SG0336"/>
<dbReference type="eggNOG" id="COG0324">
    <property type="taxonomic scope" value="Bacteria"/>
</dbReference>
<dbReference type="HOGENOM" id="CLU_032616_0_0_6"/>
<dbReference type="OrthoDB" id="9776390at2"/>
<dbReference type="BioCyc" id="SGLO343509:SGP1_RS03270-MONOMER"/>
<dbReference type="Proteomes" id="UP000001932">
    <property type="component" value="Chromosome"/>
</dbReference>
<dbReference type="GO" id="GO:0005524">
    <property type="term" value="F:ATP binding"/>
    <property type="evidence" value="ECO:0007669"/>
    <property type="project" value="UniProtKB-UniRule"/>
</dbReference>
<dbReference type="GO" id="GO:0052381">
    <property type="term" value="F:tRNA dimethylallyltransferase activity"/>
    <property type="evidence" value="ECO:0007669"/>
    <property type="project" value="UniProtKB-UniRule"/>
</dbReference>
<dbReference type="GO" id="GO:0006400">
    <property type="term" value="P:tRNA modification"/>
    <property type="evidence" value="ECO:0007669"/>
    <property type="project" value="TreeGrafter"/>
</dbReference>
<dbReference type="FunFam" id="1.10.20.140:FF:000001">
    <property type="entry name" value="tRNA dimethylallyltransferase"/>
    <property type="match status" value="1"/>
</dbReference>
<dbReference type="Gene3D" id="1.10.20.140">
    <property type="match status" value="1"/>
</dbReference>
<dbReference type="Gene3D" id="1.10.287.890">
    <property type="entry name" value="Crystal structure of tRNA isopentenylpyrophosphate transferase (bh2366) domain"/>
    <property type="match status" value="1"/>
</dbReference>
<dbReference type="Gene3D" id="3.40.50.300">
    <property type="entry name" value="P-loop containing nucleotide triphosphate hydrolases"/>
    <property type="match status" value="1"/>
</dbReference>
<dbReference type="HAMAP" id="MF_00185">
    <property type="entry name" value="IPP_trans"/>
    <property type="match status" value="1"/>
</dbReference>
<dbReference type="InterPro" id="IPR039657">
    <property type="entry name" value="Dimethylallyltransferase"/>
</dbReference>
<dbReference type="InterPro" id="IPR018022">
    <property type="entry name" value="IPT"/>
</dbReference>
<dbReference type="InterPro" id="IPR027417">
    <property type="entry name" value="P-loop_NTPase"/>
</dbReference>
<dbReference type="NCBIfam" id="TIGR00174">
    <property type="entry name" value="miaA"/>
    <property type="match status" value="1"/>
</dbReference>
<dbReference type="PANTHER" id="PTHR11088">
    <property type="entry name" value="TRNA DIMETHYLALLYLTRANSFERASE"/>
    <property type="match status" value="1"/>
</dbReference>
<dbReference type="PANTHER" id="PTHR11088:SF60">
    <property type="entry name" value="TRNA DIMETHYLALLYLTRANSFERASE"/>
    <property type="match status" value="1"/>
</dbReference>
<dbReference type="Pfam" id="PF01715">
    <property type="entry name" value="IPPT"/>
    <property type="match status" value="1"/>
</dbReference>
<dbReference type="SUPFAM" id="SSF52540">
    <property type="entry name" value="P-loop containing nucleoside triphosphate hydrolases"/>
    <property type="match status" value="1"/>
</dbReference>
<gene>
    <name evidence="1" type="primary">miaA</name>
    <name type="ordered locus">SG0336</name>
</gene>
<sequence length="312" mass="35202">MTEPTFPRRPQAIFLMGPTASGKTVLAMALHQHLPVEIISVDSALIYRGMDIGTAKPGADELARAPHRLIDIRDPAEAYSAADFRRDALKEMAEITEAGRIPLLVGGTMLYFKALLEGLSPLPSADPEVRARIEREAETVGWQALHRQLQQIDPIAANRIHPNDPQRLLRALEVFFVSGNTLTELTKISGEALAYRVHQFAIVPLDRALLHQRIAQRFHQMLAAGFEHEVSTLFARGDLHREMPSIRCVGYRQMWSYLADETDYDDMVFRGICATRQLAKRQMTWLRGWHDVHWLDSDEPAALDRVLQVVSA</sequence>
<reference key="1">
    <citation type="journal article" date="2006" name="Genome Res.">
        <title>Massive genome erosion and functional adaptations provide insights into the symbiotic lifestyle of Sodalis glossinidius in the tsetse host.</title>
        <authorList>
            <person name="Toh H."/>
            <person name="Weiss B.L."/>
            <person name="Perkin S.A.H."/>
            <person name="Yamashita A."/>
            <person name="Oshima K."/>
            <person name="Hattori M."/>
            <person name="Aksoy S."/>
        </authorList>
    </citation>
    <scope>NUCLEOTIDE SEQUENCE [LARGE SCALE GENOMIC DNA]</scope>
    <source>
        <strain>morsitans</strain>
    </source>
</reference>